<reference key="1">
    <citation type="patent" date="2002-10-22" number="US6797808">
        <title>Alpha-conotoxin peptides.</title>
        <authorList>
            <person name="Watkins M."/>
            <person name="Olivera B.M."/>
            <person name="Hillyard D.R."/>
            <person name="McIntosh J.M."/>
            <person name="Jones R.M."/>
        </authorList>
    </citation>
    <scope>NUCLEOTIDE SEQUENCE [GENOMIC DNA]</scope>
</reference>
<reference key="2">
    <citation type="journal article" date="2012" name="J. Proteome Res.">
        <title>Constrained de novo sequencing of conotoxins.</title>
        <authorList>
            <person name="Bhatia S."/>
            <person name="Kil Y.J."/>
            <person name="Ueberheide B."/>
            <person name="Chait B.T."/>
            <person name="Tayo L."/>
            <person name="Cruz L."/>
            <person name="Lu B."/>
            <person name="Yates J.R. III"/>
            <person name="Bern M."/>
        </authorList>
    </citation>
    <scope>IDENTIFICATION BY MASS SPECTROMETRY</scope>
    <scope>SUBCELLULAR LOCATION</scope>
    <scope>HYDROXYLATION AT PRO-44 AND PRO-50</scope>
    <source>
        <tissue>Venom</tissue>
    </source>
</reference>
<reference key="3">
    <citation type="journal article" date="2016" name="Angew. Chem. Int. Ed.">
        <title>Structure-activity studies of cysteine-rich alpha-conotoxins that inhibit high-voltage-activated calcium channels via GABA(B) receptor activation reveal a minimal functional motif.</title>
        <authorList>
            <person name="Carstens B.B."/>
            <person name="Berecki G."/>
            <person name="Daniel J.T."/>
            <person name="Lee H.S."/>
            <person name="Jackson K.A."/>
            <person name="Tae H.S."/>
            <person name="Sadeghi M."/>
            <person name="Castro J."/>
            <person name="O'Donnell T."/>
            <person name="Deiteren A."/>
            <person name="Brierley S.M."/>
            <person name="Craik D.J."/>
            <person name="Adams D.J."/>
            <person name="Clark R.J."/>
        </authorList>
    </citation>
    <scope>FUNCTION</scope>
    <scope>SYNTHESIS OF 44-60</scope>
</reference>
<sequence>MFTVFLLVVLATTVVSFTSGRSTFRGRNAAAKASGLVSLTDRRPQCCSHPACNVDHPEICR</sequence>
<name>CA1Z_CONTE</name>
<keyword id="KW-0008">Acetylcholine receptor inhibiting toxin</keyword>
<keyword id="KW-1015">Disulfide bond</keyword>
<keyword id="KW-1213">G-protein coupled receptor impairing toxin</keyword>
<keyword id="KW-0379">Hydroxylation</keyword>
<keyword id="KW-0528">Neurotoxin</keyword>
<keyword id="KW-0629">Postsynaptic neurotoxin</keyword>
<keyword id="KW-0964">Secreted</keyword>
<keyword id="KW-0732">Signal</keyword>
<keyword id="KW-0800">Toxin</keyword>
<accession>P0DPL9</accession>
<protein>
    <recommendedName>
        <fullName evidence="6">Alpha-conotoxin-like Tx1.2</fullName>
    </recommendedName>
    <alternativeName>
        <fullName evidence="7">Conotoxin Tx1.1</fullName>
    </alternativeName>
</protein>
<dbReference type="EMBL" id="BD261400">
    <property type="status" value="NOT_ANNOTATED_CDS"/>
    <property type="molecule type" value="Unassigned_DNA"/>
</dbReference>
<dbReference type="EMBL" id="AR584807">
    <property type="status" value="NOT_ANNOTATED_CDS"/>
    <property type="molecule type" value="Genomic_DNA"/>
</dbReference>
<dbReference type="GO" id="GO:0005576">
    <property type="term" value="C:extracellular region"/>
    <property type="evidence" value="ECO:0007669"/>
    <property type="project" value="UniProtKB-SubCell"/>
</dbReference>
<dbReference type="GO" id="GO:0035792">
    <property type="term" value="C:host cell postsynaptic membrane"/>
    <property type="evidence" value="ECO:0007669"/>
    <property type="project" value="UniProtKB-KW"/>
</dbReference>
<dbReference type="GO" id="GO:0030550">
    <property type="term" value="F:acetylcholine receptor inhibitor activity"/>
    <property type="evidence" value="ECO:0007669"/>
    <property type="project" value="UniProtKB-KW"/>
</dbReference>
<dbReference type="GO" id="GO:0090729">
    <property type="term" value="F:toxin activity"/>
    <property type="evidence" value="ECO:0007669"/>
    <property type="project" value="UniProtKB-KW"/>
</dbReference>
<dbReference type="InterPro" id="IPR009958">
    <property type="entry name" value="Conotoxin_a-typ"/>
</dbReference>
<dbReference type="InterPro" id="IPR018072">
    <property type="entry name" value="Conotoxin_a-typ_CS"/>
</dbReference>
<dbReference type="Pfam" id="PF07365">
    <property type="entry name" value="Toxin_8"/>
    <property type="match status" value="1"/>
</dbReference>
<dbReference type="PROSITE" id="PS60014">
    <property type="entry name" value="ALPHA_CONOTOXIN"/>
    <property type="match status" value="1"/>
</dbReference>
<evidence type="ECO:0000250" key="1">
    <source>
        <dbReference type="UniProtKB" id="P0CE73"/>
    </source>
</evidence>
<evidence type="ECO:0000250" key="2">
    <source>
        <dbReference type="UniProtKB" id="P56636"/>
    </source>
</evidence>
<evidence type="ECO:0000255" key="3"/>
<evidence type="ECO:0000269" key="4">
    <source>
    </source>
</evidence>
<evidence type="ECO:0000269" key="5">
    <source>
    </source>
</evidence>
<evidence type="ECO:0000303" key="6">
    <source>
    </source>
</evidence>
<evidence type="ECO:0000303" key="7">
    <source ref="1"/>
</evidence>
<evidence type="ECO:0000305" key="8"/>
<evidence type="ECO:0000305" key="9">
    <source>
    </source>
</evidence>
<evidence type="ECO:0000305" key="10">
    <source>
    </source>
</evidence>
<comment type="function">
    <text evidence="1 5">Alpha-conotoxins act on postsynaptic membranes, they bind to the nicotinic acetylcholine receptors (nAChR) and thus inhibit them (By similarity). This toxin also inhibits high voltage-activated (HVA) calcium channel currents in rat DRG neurons (8% inhibition at 1 uM toxin) probably by activating GABA(B) receptors (GABBR1 and/or GABBR2) (PubMed:26948522).</text>
</comment>
<comment type="subcellular location">
    <subcellularLocation>
        <location evidence="4">Secreted</location>
    </subcellularLocation>
</comment>
<comment type="tissue specificity">
    <text evidence="9">Expressed by the venom duct.</text>
</comment>
<comment type="domain">
    <text evidence="8">The cysteine framework is I (CC-C-C). Alpha4/7 pattern.</text>
</comment>
<comment type="similarity">
    <text evidence="8">Belongs to the conotoxin A superfamily.</text>
</comment>
<comment type="caution">
    <text evidence="10">The synthetic peptide described in PubMed:26948522 is one residue shorter than the mature sequence shown in this entry (44-60) (the Arg-43 is removed) and the Cys-60 is amidated.</text>
</comment>
<proteinExistence type="evidence at protein level"/>
<feature type="signal peptide" evidence="3">
    <location>
        <begin position="1"/>
        <end position="20"/>
    </location>
</feature>
<feature type="propeptide" id="PRO_0000445056" evidence="4">
    <location>
        <begin position="21"/>
        <end position="42"/>
    </location>
</feature>
<feature type="peptide" id="PRO_0000445057" description="Alpha-conotoxin-like Tx1.2" evidence="4">
    <location>
        <begin position="43"/>
        <end position="60"/>
    </location>
</feature>
<feature type="region of interest" description="Ser-Xaa-Pro motif, crucial for potent interaction with nAChR" evidence="2">
    <location>
        <begin position="48"/>
        <end position="50"/>
    </location>
</feature>
<feature type="modified residue" description="4-hydroxyproline" evidence="4">
    <location>
        <position position="44"/>
    </location>
</feature>
<feature type="modified residue" description="4-hydroxyproline" evidence="4">
    <location>
        <position position="50"/>
    </location>
</feature>
<feature type="disulfide bond" evidence="2">
    <location>
        <begin position="46"/>
        <end position="52"/>
    </location>
</feature>
<feature type="disulfide bond" evidence="2">
    <location>
        <begin position="47"/>
        <end position="60"/>
    </location>
</feature>
<organism>
    <name type="scientific">Conus textile</name>
    <name type="common">Cloth-of-gold cone</name>
    <dbReference type="NCBI Taxonomy" id="6494"/>
    <lineage>
        <taxon>Eukaryota</taxon>
        <taxon>Metazoa</taxon>
        <taxon>Spiralia</taxon>
        <taxon>Lophotrochozoa</taxon>
        <taxon>Mollusca</taxon>
        <taxon>Gastropoda</taxon>
        <taxon>Caenogastropoda</taxon>
        <taxon>Neogastropoda</taxon>
        <taxon>Conoidea</taxon>
        <taxon>Conidae</taxon>
        <taxon>Conus</taxon>
        <taxon>Cylinder</taxon>
    </lineage>
</organism>